<gene>
    <name type="primary">DPL1</name>
    <name type="ordered locus">At1g27980</name>
    <name type="ORF">F13K9.8</name>
</gene>
<keyword id="KW-0256">Endoplasmic reticulum</keyword>
<keyword id="KW-0443">Lipid metabolism</keyword>
<keyword id="KW-0456">Lyase</keyword>
<keyword id="KW-0472">Membrane</keyword>
<keyword id="KW-0663">Pyridoxal phosphate</keyword>
<keyword id="KW-1185">Reference proteome</keyword>
<keyword id="KW-0735">Signal-anchor</keyword>
<keyword id="KW-0746">Sphingolipid metabolism</keyword>
<keyword id="KW-0346">Stress response</keyword>
<keyword id="KW-0812">Transmembrane</keyword>
<keyword id="KW-1133">Transmembrane helix</keyword>
<name>SGPL_ARATH</name>
<feature type="chain" id="PRO_0000147017" description="Sphingosine-1-phosphate lyase">
    <location>
        <begin position="1"/>
        <end position="544"/>
    </location>
</feature>
<feature type="topological domain" description="Lumenal" evidence="2">
    <location>
        <begin position="1"/>
        <end position="29"/>
    </location>
</feature>
<feature type="transmembrane region" description="Helical; Signal-anchor for type III membrane protein" evidence="2">
    <location>
        <begin position="30"/>
        <end position="50"/>
    </location>
</feature>
<feature type="topological domain" description="Cytoplasmic" evidence="2">
    <location>
        <begin position="51"/>
        <end position="544"/>
    </location>
</feature>
<feature type="modified residue" description="N6-(pyridoxal phosphate)lysine" evidence="1">
    <location>
        <position position="349"/>
    </location>
</feature>
<comment type="function">
    <text evidence="3 4">Cleaves phosphorylated sphingoid bases (PSBs), such as sphingosine-1-phosphate, into fatty aldehydes and phosphoethanolamine. May play a minor role in maintenance of sphingolipid metabolism during normal plant development and growth, but be required for maintaining sphingoid long chain bases (LCB) and their phosphorylated derivatives (LCB-P) levels when sphingolipid metabolism is perturbed. May play a role in dehydration stress.</text>
</comment>
<comment type="catalytic activity">
    <reaction evidence="3 4">
        <text>sphinganine 1-phosphate = hexadecanal + phosphoethanolamine</text>
        <dbReference type="Rhea" id="RHEA:18593"/>
        <dbReference type="ChEBI" id="CHEBI:17600"/>
        <dbReference type="ChEBI" id="CHEBI:57939"/>
        <dbReference type="ChEBI" id="CHEBI:58190"/>
        <dbReference type="EC" id="4.1.2.27"/>
    </reaction>
</comment>
<comment type="cofactor">
    <cofactor evidence="1">
        <name>pyridoxal 5'-phosphate</name>
        <dbReference type="ChEBI" id="CHEBI:597326"/>
    </cofactor>
</comment>
<comment type="pathway">
    <text>Lipid metabolism; sphingolipid metabolism.</text>
</comment>
<comment type="subcellular location">
    <subcellularLocation>
        <location evidence="6 7">Endoplasmic reticulum membrane</location>
        <topology evidence="6 7">Single-pass type III membrane protein</topology>
    </subcellularLocation>
</comment>
<comment type="tissue specificity">
    <text evidence="4">Expressed in the peripheral parts of leaves and the bases of trichomes.</text>
</comment>
<comment type="disruption phenotype">
    <text evidence="4">No visible phenotype under normal growth conditions.</text>
</comment>
<comment type="similarity">
    <text evidence="5">Belongs to the group II decarboxylase family. Sphingosine-1-phosphate lyase subfamily.</text>
</comment>
<comment type="sequence caution" evidence="5">
    <conflict type="erroneous initiation">
        <sequence resource="EMBL-CDS" id="AAM62669"/>
    </conflict>
    <text>Truncated N-terminus.</text>
</comment>
<dbReference type="EC" id="4.1.2.27"/>
<dbReference type="EMBL" id="AB175035">
    <property type="protein sequence ID" value="BAD13416.1"/>
    <property type="molecule type" value="mRNA"/>
</dbReference>
<dbReference type="EMBL" id="AC069471">
    <property type="protein sequence ID" value="AAG51494.1"/>
    <property type="molecule type" value="Genomic_DNA"/>
</dbReference>
<dbReference type="EMBL" id="CP002684">
    <property type="protein sequence ID" value="AEE30898.1"/>
    <property type="molecule type" value="Genomic_DNA"/>
</dbReference>
<dbReference type="EMBL" id="AF360166">
    <property type="protein sequence ID" value="AAK25876.1"/>
    <property type="molecule type" value="mRNA"/>
</dbReference>
<dbReference type="EMBL" id="AY113914">
    <property type="protein sequence ID" value="AAM44962.1"/>
    <property type="molecule type" value="mRNA"/>
</dbReference>
<dbReference type="EMBL" id="AY085442">
    <property type="protein sequence ID" value="AAM62669.1"/>
    <property type="status" value="ALT_INIT"/>
    <property type="molecule type" value="mRNA"/>
</dbReference>
<dbReference type="PIR" id="C86405">
    <property type="entry name" value="C86405"/>
</dbReference>
<dbReference type="RefSeq" id="NP_174119.1">
    <property type="nucleotide sequence ID" value="NM_102563.4"/>
</dbReference>
<dbReference type="SMR" id="Q9C509"/>
<dbReference type="FunCoup" id="Q9C509">
    <property type="interactions" value="3449"/>
</dbReference>
<dbReference type="IntAct" id="Q9C509">
    <property type="interactions" value="1"/>
</dbReference>
<dbReference type="STRING" id="3702.Q9C509"/>
<dbReference type="iPTMnet" id="Q9C509"/>
<dbReference type="PaxDb" id="3702-AT1G27980.1"/>
<dbReference type="ProteomicsDB" id="234544"/>
<dbReference type="EnsemblPlants" id="AT1G27980.1">
    <property type="protein sequence ID" value="AT1G27980.1"/>
    <property type="gene ID" value="AT1G27980"/>
</dbReference>
<dbReference type="GeneID" id="839691"/>
<dbReference type="Gramene" id="AT1G27980.1">
    <property type="protein sequence ID" value="AT1G27980.1"/>
    <property type="gene ID" value="AT1G27980"/>
</dbReference>
<dbReference type="KEGG" id="ath:AT1G27980"/>
<dbReference type="Araport" id="AT1G27980"/>
<dbReference type="TAIR" id="AT1G27980">
    <property type="gene designation" value="DPL1"/>
</dbReference>
<dbReference type="eggNOG" id="KOG1383">
    <property type="taxonomic scope" value="Eukaryota"/>
</dbReference>
<dbReference type="HOGENOM" id="CLU_028929_1_1_1"/>
<dbReference type="InParanoid" id="Q9C509"/>
<dbReference type="OMA" id="FKDHQFT"/>
<dbReference type="PhylomeDB" id="Q9C509"/>
<dbReference type="BioCyc" id="ARA:AT1G27980-MONOMER"/>
<dbReference type="BioCyc" id="MetaCyc:AT1G27980-MONOMER"/>
<dbReference type="BRENDA" id="4.1.2.27">
    <property type="organism ID" value="399"/>
</dbReference>
<dbReference type="UniPathway" id="UPA00222"/>
<dbReference type="PRO" id="PR:Q9C509"/>
<dbReference type="Proteomes" id="UP000006548">
    <property type="component" value="Chromosome 1"/>
</dbReference>
<dbReference type="ExpressionAtlas" id="Q9C509">
    <property type="expression patterns" value="baseline and differential"/>
</dbReference>
<dbReference type="GO" id="GO:0005783">
    <property type="term" value="C:endoplasmic reticulum"/>
    <property type="evidence" value="ECO:0000314"/>
    <property type="project" value="TAIR"/>
</dbReference>
<dbReference type="GO" id="GO:0005789">
    <property type="term" value="C:endoplasmic reticulum membrane"/>
    <property type="evidence" value="ECO:0007669"/>
    <property type="project" value="UniProtKB-SubCell"/>
</dbReference>
<dbReference type="GO" id="GO:0030170">
    <property type="term" value="F:pyridoxal phosphate binding"/>
    <property type="evidence" value="ECO:0007669"/>
    <property type="project" value="InterPro"/>
</dbReference>
<dbReference type="GO" id="GO:0008117">
    <property type="term" value="F:sphinganine-1-phosphate aldolase activity"/>
    <property type="evidence" value="ECO:0000316"/>
    <property type="project" value="TAIR"/>
</dbReference>
<dbReference type="GO" id="GO:0019752">
    <property type="term" value="P:carboxylic acid metabolic process"/>
    <property type="evidence" value="ECO:0007669"/>
    <property type="project" value="InterPro"/>
</dbReference>
<dbReference type="GO" id="GO:0030149">
    <property type="term" value="P:sphingolipid catabolic process"/>
    <property type="evidence" value="ECO:0000315"/>
    <property type="project" value="TAIR"/>
</dbReference>
<dbReference type="FunFam" id="3.90.1150.10:FF:000020">
    <property type="entry name" value="Sphingosine-1-phosphate lyase 1"/>
    <property type="match status" value="1"/>
</dbReference>
<dbReference type="FunFam" id="6.10.140.2150:FF:000001">
    <property type="entry name" value="Sphingosine-1-phosphate lyase 1"/>
    <property type="match status" value="1"/>
</dbReference>
<dbReference type="FunFam" id="3.40.640.10:FF:000020">
    <property type="entry name" value="sphingosine-1-phosphate lyase 1"/>
    <property type="match status" value="1"/>
</dbReference>
<dbReference type="Gene3D" id="6.10.140.2150">
    <property type="match status" value="1"/>
</dbReference>
<dbReference type="Gene3D" id="3.90.1150.10">
    <property type="entry name" value="Aspartate Aminotransferase, domain 1"/>
    <property type="match status" value="1"/>
</dbReference>
<dbReference type="Gene3D" id="3.40.640.10">
    <property type="entry name" value="Type I PLP-dependent aspartate aminotransferase-like (Major domain)"/>
    <property type="match status" value="1"/>
</dbReference>
<dbReference type="InterPro" id="IPR050477">
    <property type="entry name" value="GrpII_AminoAcid_Decarb"/>
</dbReference>
<dbReference type="InterPro" id="IPR002129">
    <property type="entry name" value="PyrdxlP-dep_de-COase"/>
</dbReference>
<dbReference type="InterPro" id="IPR015424">
    <property type="entry name" value="PyrdxlP-dep_Trfase"/>
</dbReference>
<dbReference type="InterPro" id="IPR015421">
    <property type="entry name" value="PyrdxlP-dep_Trfase_major"/>
</dbReference>
<dbReference type="InterPro" id="IPR015422">
    <property type="entry name" value="PyrdxlP-dep_Trfase_small"/>
</dbReference>
<dbReference type="PANTHER" id="PTHR42735">
    <property type="match status" value="1"/>
</dbReference>
<dbReference type="PANTHER" id="PTHR42735:SF6">
    <property type="entry name" value="SPHINGOSINE-1-PHOSPHATE LYASE 1"/>
    <property type="match status" value="1"/>
</dbReference>
<dbReference type="Pfam" id="PF00282">
    <property type="entry name" value="Pyridoxal_deC"/>
    <property type="match status" value="1"/>
</dbReference>
<dbReference type="SUPFAM" id="SSF53383">
    <property type="entry name" value="PLP-dependent transferases"/>
    <property type="match status" value="1"/>
</dbReference>
<organism>
    <name type="scientific">Arabidopsis thaliana</name>
    <name type="common">Mouse-ear cress</name>
    <dbReference type="NCBI Taxonomy" id="3702"/>
    <lineage>
        <taxon>Eukaryota</taxon>
        <taxon>Viridiplantae</taxon>
        <taxon>Streptophyta</taxon>
        <taxon>Embryophyta</taxon>
        <taxon>Tracheophyta</taxon>
        <taxon>Spermatophyta</taxon>
        <taxon>Magnoliopsida</taxon>
        <taxon>eudicotyledons</taxon>
        <taxon>Gunneridae</taxon>
        <taxon>Pentapetalae</taxon>
        <taxon>rosids</taxon>
        <taxon>malvids</taxon>
        <taxon>Brassicales</taxon>
        <taxon>Brassicaceae</taxon>
        <taxon>Camelineae</taxon>
        <taxon>Arabidopsis</taxon>
    </lineage>
</organism>
<accession>Q9C509</accession>
<accession>Q549V9</accession>
<accession>Q8LEF9</accession>
<protein>
    <recommendedName>
        <fullName>Sphingosine-1-phosphate lyase</fullName>
        <shortName>AtSPL1</shortName>
        <shortName>S1PL</shortName>
        <shortName>SP-lyase</shortName>
        <shortName>SPL</shortName>
        <ecNumber>4.1.2.27</ecNumber>
    </recommendedName>
    <alternativeName>
        <fullName>Dihydrosphingosine phosphate lyase 1</fullName>
        <shortName>AtDPL1</shortName>
    </alternativeName>
    <alternativeName>
        <fullName>Sphingosine-1-phosphate aldolase</fullName>
    </alternativeName>
</protein>
<evidence type="ECO:0000250" key="1"/>
<evidence type="ECO:0000255" key="2"/>
<evidence type="ECO:0000269" key="3">
    <source>
    </source>
</evidence>
<evidence type="ECO:0000269" key="4">
    <source>
    </source>
</evidence>
<evidence type="ECO:0000305" key="5"/>
<evidence type="ECO:0000305" key="6">
    <source>
    </source>
</evidence>
<evidence type="ECO:0000305" key="7">
    <source>
    </source>
</evidence>
<proteinExistence type="evidence at protein level"/>
<reference key="1">
    <citation type="journal article" date="2008" name="Plant Cell Physiol.">
        <title>Degradation of sphingoid long-chain base 1-phosphates (LCB-1Ps): functional characterization and expression of AtDPL1 encoding LCB-1P lyase involved in the dehydration stress response in Arabidopsis.</title>
        <authorList>
            <person name="Nishikawa M."/>
            <person name="Hosokawa K."/>
            <person name="Ishiguro M."/>
            <person name="Minamioka H."/>
            <person name="Tamura K."/>
            <person name="Hara-Nishimura I."/>
            <person name="Takahashi Y."/>
            <person name="Shimazaki K."/>
            <person name="Imai H."/>
        </authorList>
    </citation>
    <scope>NUCLEOTIDE SEQUENCE [MRNA]</scope>
    <scope>FUNCTION</scope>
    <scope>CATALYTIC ACTIVITY</scope>
    <scope>SUBCELLULAR LOCATION</scope>
    <scope>TISSUE SPECIFICITY</scope>
    <scope>DISRUPTION PHENOTYPE</scope>
</reference>
<reference key="2">
    <citation type="journal article" date="2000" name="Nature">
        <title>Sequence and analysis of chromosome 1 of the plant Arabidopsis thaliana.</title>
        <authorList>
            <person name="Theologis A."/>
            <person name="Ecker J.R."/>
            <person name="Palm C.J."/>
            <person name="Federspiel N.A."/>
            <person name="Kaul S."/>
            <person name="White O."/>
            <person name="Alonso J."/>
            <person name="Altafi H."/>
            <person name="Araujo R."/>
            <person name="Bowman C.L."/>
            <person name="Brooks S.Y."/>
            <person name="Buehler E."/>
            <person name="Chan A."/>
            <person name="Chao Q."/>
            <person name="Chen H."/>
            <person name="Cheuk R.F."/>
            <person name="Chin C.W."/>
            <person name="Chung M.K."/>
            <person name="Conn L."/>
            <person name="Conway A.B."/>
            <person name="Conway A.R."/>
            <person name="Creasy T.H."/>
            <person name="Dewar K."/>
            <person name="Dunn P."/>
            <person name="Etgu P."/>
            <person name="Feldblyum T.V."/>
            <person name="Feng J.-D."/>
            <person name="Fong B."/>
            <person name="Fujii C.Y."/>
            <person name="Gill J.E."/>
            <person name="Goldsmith A.D."/>
            <person name="Haas B."/>
            <person name="Hansen N.F."/>
            <person name="Hughes B."/>
            <person name="Huizar L."/>
            <person name="Hunter J.L."/>
            <person name="Jenkins J."/>
            <person name="Johnson-Hopson C."/>
            <person name="Khan S."/>
            <person name="Khaykin E."/>
            <person name="Kim C.J."/>
            <person name="Koo H.L."/>
            <person name="Kremenetskaia I."/>
            <person name="Kurtz D.B."/>
            <person name="Kwan A."/>
            <person name="Lam B."/>
            <person name="Langin-Hooper S."/>
            <person name="Lee A."/>
            <person name="Lee J.M."/>
            <person name="Lenz C.A."/>
            <person name="Li J.H."/>
            <person name="Li Y.-P."/>
            <person name="Lin X."/>
            <person name="Liu S.X."/>
            <person name="Liu Z.A."/>
            <person name="Luros J.S."/>
            <person name="Maiti R."/>
            <person name="Marziali A."/>
            <person name="Militscher J."/>
            <person name="Miranda M."/>
            <person name="Nguyen M."/>
            <person name="Nierman W.C."/>
            <person name="Osborne B.I."/>
            <person name="Pai G."/>
            <person name="Peterson J."/>
            <person name="Pham P.K."/>
            <person name="Rizzo M."/>
            <person name="Rooney T."/>
            <person name="Rowley D."/>
            <person name="Sakano H."/>
            <person name="Salzberg S.L."/>
            <person name="Schwartz J.R."/>
            <person name="Shinn P."/>
            <person name="Southwick A.M."/>
            <person name="Sun H."/>
            <person name="Tallon L.J."/>
            <person name="Tambunga G."/>
            <person name="Toriumi M.J."/>
            <person name="Town C.D."/>
            <person name="Utterback T."/>
            <person name="Van Aken S."/>
            <person name="Vaysberg M."/>
            <person name="Vysotskaia V.S."/>
            <person name="Walker M."/>
            <person name="Wu D."/>
            <person name="Yu G."/>
            <person name="Fraser C.M."/>
            <person name="Venter J.C."/>
            <person name="Davis R.W."/>
        </authorList>
    </citation>
    <scope>NUCLEOTIDE SEQUENCE [LARGE SCALE GENOMIC DNA]</scope>
    <source>
        <strain>cv. Columbia</strain>
    </source>
</reference>
<reference key="3">
    <citation type="journal article" date="2017" name="Plant J.">
        <title>Araport11: a complete reannotation of the Arabidopsis thaliana reference genome.</title>
        <authorList>
            <person name="Cheng C.Y."/>
            <person name="Krishnakumar V."/>
            <person name="Chan A.P."/>
            <person name="Thibaud-Nissen F."/>
            <person name="Schobel S."/>
            <person name="Town C.D."/>
        </authorList>
    </citation>
    <scope>GENOME REANNOTATION</scope>
    <source>
        <strain>cv. Columbia</strain>
    </source>
</reference>
<reference key="4">
    <citation type="journal article" date="2003" name="Science">
        <title>Empirical analysis of transcriptional activity in the Arabidopsis genome.</title>
        <authorList>
            <person name="Yamada K."/>
            <person name="Lim J."/>
            <person name="Dale J.M."/>
            <person name="Chen H."/>
            <person name="Shinn P."/>
            <person name="Palm C.J."/>
            <person name="Southwick A.M."/>
            <person name="Wu H.C."/>
            <person name="Kim C.J."/>
            <person name="Nguyen M."/>
            <person name="Pham P.K."/>
            <person name="Cheuk R.F."/>
            <person name="Karlin-Newmann G."/>
            <person name="Liu S.X."/>
            <person name="Lam B."/>
            <person name="Sakano H."/>
            <person name="Wu T."/>
            <person name="Yu G."/>
            <person name="Miranda M."/>
            <person name="Quach H.L."/>
            <person name="Tripp M."/>
            <person name="Chang C.H."/>
            <person name="Lee J.M."/>
            <person name="Toriumi M.J."/>
            <person name="Chan M.M."/>
            <person name="Tang C.C."/>
            <person name="Onodera C.S."/>
            <person name="Deng J.M."/>
            <person name="Akiyama K."/>
            <person name="Ansari Y."/>
            <person name="Arakawa T."/>
            <person name="Banh J."/>
            <person name="Banno F."/>
            <person name="Bowser L."/>
            <person name="Brooks S.Y."/>
            <person name="Carninci P."/>
            <person name="Chao Q."/>
            <person name="Choy N."/>
            <person name="Enju A."/>
            <person name="Goldsmith A.D."/>
            <person name="Gurjal M."/>
            <person name="Hansen N.F."/>
            <person name="Hayashizaki Y."/>
            <person name="Johnson-Hopson C."/>
            <person name="Hsuan V.W."/>
            <person name="Iida K."/>
            <person name="Karnes M."/>
            <person name="Khan S."/>
            <person name="Koesema E."/>
            <person name="Ishida J."/>
            <person name="Jiang P.X."/>
            <person name="Jones T."/>
            <person name="Kawai J."/>
            <person name="Kamiya A."/>
            <person name="Meyers C."/>
            <person name="Nakajima M."/>
            <person name="Narusaka M."/>
            <person name="Seki M."/>
            <person name="Sakurai T."/>
            <person name="Satou M."/>
            <person name="Tamse R."/>
            <person name="Vaysberg M."/>
            <person name="Wallender E.K."/>
            <person name="Wong C."/>
            <person name="Yamamura Y."/>
            <person name="Yuan S."/>
            <person name="Shinozaki K."/>
            <person name="Davis R.W."/>
            <person name="Theologis A."/>
            <person name="Ecker J.R."/>
        </authorList>
    </citation>
    <scope>NUCLEOTIDE SEQUENCE [LARGE SCALE MRNA]</scope>
    <source>
        <strain>cv. Columbia</strain>
    </source>
</reference>
<reference key="5">
    <citation type="submission" date="2002-03" db="EMBL/GenBank/DDBJ databases">
        <title>Full-length cDNA from Arabidopsis thaliana.</title>
        <authorList>
            <person name="Brover V.V."/>
            <person name="Troukhan M.E."/>
            <person name="Alexandrov N.A."/>
            <person name="Lu Y.-P."/>
            <person name="Flavell R.B."/>
            <person name="Feldmann K.A."/>
        </authorList>
    </citation>
    <scope>NUCLEOTIDE SEQUENCE [LARGE SCALE MRNA] OF 412-544</scope>
</reference>
<reference key="6">
    <citation type="journal article" date="2007" name="J. Biol. Chem.">
        <title>Arabidopsis mutants lacking long chain base phosphate lyase are fumonisin-sensitive and accumulate trihydroxy-18:1 long chain base phosphate.</title>
        <authorList>
            <person name="Tsegaye Y."/>
            <person name="Richardson C.G."/>
            <person name="Bravo J.E."/>
            <person name="Mulcahy B.J."/>
            <person name="Lynch D.V."/>
            <person name="Markham J.E."/>
            <person name="Jaworski J.G."/>
            <person name="Chen M."/>
            <person name="Cahoon E.B."/>
            <person name="Dunn T.M."/>
        </authorList>
    </citation>
    <scope>FUNCTION</scope>
    <scope>CATALYTIC ACTIVITY</scope>
    <scope>SUBCELLULAR LOCATION</scope>
</reference>
<sequence>MDSFSYSSMKSMLIQARGSLNSRLSEFEPLVLLLVPLVSLFLAQIIGSVFGVVHEKGLKACLIGFIMGLLKMIPGVQNYIDAEKQKVVDQLQSGSSSKKKNKTEVLPVKGLGVEVLEKMENEKRNDAIWQGKCSGTVYIGGAESEGHFSLINQACSMFAHTNPLHIDVFQSVVRFESEVVAMTAALLGSKETASGGQICGNMTSGGTESIVLAVKSSRDYMKYKKGITRPEMIIPESGHSAYDKAAQYFKIKLWRVPVDKDFRADVKATRRHINRNTIMIVGSAPGFPHGIIDPIEELGQLALSYGICFHVDLCLGGFVLPFARKLGYQIPPFDFSVQGVTSISVDVHKYGLAPKGTSTVLYRNHEIRKHQFVAVTEWSGGLYVSPTIAGSRPGSLVAGAWAAMMSLGEEGYLQNTSKIMEASKRLEEGVREIHELFVIGKPDMTIVAFGSKALDIFEVNDIMSSKGWHLNALQRPNSIHICITLQHVPVVDDFLRDLREAVETVKANPGPITGGLAPIYGAAGKMPDRGMVNELLVSFMDSQY</sequence>